<sequence>MIPVFDPVALGLYMLGYLFMFVIAATVAPRVAGAVSGRLTLYGAMALTGVMIVLTTAFVIYLFVLVAAPTLATVSFLVGLIAFVVLMNLLTYVASPYIINASYGARPDPRLQQIVDEVAARLGAPFKLKAVVVDGPPNAFAYGNFLTGRYVAVTSGMLSLVDRRELEAVIGHEIGHHLHRDNAIMLLFGVLPSVVYYLGVTAVHMGLGSGNSRGGNAALLAVGVVAVLASFLIQLLVLAFSRLREYYADTAGAKAAGKEAMQFALAKIHKFYFMAPEARQAVSESKFRALFIYALVNAVANPFVTITRAEVEQIKRANYSALQEVFSTHPPIPKRLRFLDQLPL</sequence>
<keyword id="KW-1003">Cell membrane</keyword>
<keyword id="KW-0378">Hydrolase</keyword>
<keyword id="KW-0472">Membrane</keyword>
<keyword id="KW-0479">Metal-binding</keyword>
<keyword id="KW-0482">Metalloprotease</keyword>
<keyword id="KW-0645">Protease</keyword>
<keyword id="KW-0812">Transmembrane</keyword>
<keyword id="KW-1133">Transmembrane helix</keyword>
<keyword id="KW-0862">Zinc</keyword>
<comment type="cofactor">
    <cofactor evidence="1">
        <name>Zn(2+)</name>
        <dbReference type="ChEBI" id="CHEBI:29105"/>
    </cofactor>
    <text evidence="1">Binds 1 zinc ion per subunit.</text>
</comment>
<comment type="subcellular location">
    <subcellularLocation>
        <location evidence="1">Cell membrane</location>
        <topology evidence="1">Multi-pass membrane protein</topology>
    </subcellularLocation>
</comment>
<comment type="similarity">
    <text evidence="1">Belongs to the peptidase M48B family.</text>
</comment>
<feature type="chain" id="PRO_1000020919" description="Protease HtpX homolog">
    <location>
        <begin position="1"/>
        <end position="344"/>
    </location>
</feature>
<feature type="transmembrane region" description="Helical" evidence="1">
    <location>
        <begin position="8"/>
        <end position="28"/>
    </location>
</feature>
<feature type="transmembrane region" description="Helical" evidence="1">
    <location>
        <begin position="46"/>
        <end position="66"/>
    </location>
</feature>
<feature type="transmembrane region" description="Helical" evidence="1">
    <location>
        <begin position="74"/>
        <end position="94"/>
    </location>
</feature>
<feature type="transmembrane region" description="Helical" evidence="1">
    <location>
        <begin position="183"/>
        <end position="203"/>
    </location>
</feature>
<feature type="transmembrane region" description="Helical" evidence="1">
    <location>
        <begin position="220"/>
        <end position="240"/>
    </location>
</feature>
<feature type="active site" evidence="1">
    <location>
        <position position="173"/>
    </location>
</feature>
<feature type="binding site" evidence="1">
    <location>
        <position position="172"/>
    </location>
    <ligand>
        <name>Zn(2+)</name>
        <dbReference type="ChEBI" id="CHEBI:29105"/>
        <note>catalytic</note>
    </ligand>
</feature>
<feature type="binding site" evidence="1">
    <location>
        <position position="176"/>
    </location>
    <ligand>
        <name>Zn(2+)</name>
        <dbReference type="ChEBI" id="CHEBI:29105"/>
        <note>catalytic</note>
    </ligand>
</feature>
<feature type="binding site" evidence="1">
    <location>
        <position position="245"/>
    </location>
    <ligand>
        <name>Zn(2+)</name>
        <dbReference type="ChEBI" id="CHEBI:29105"/>
        <note>catalytic</note>
    </ligand>
</feature>
<evidence type="ECO:0000255" key="1">
    <source>
        <dbReference type="HAMAP-Rule" id="MF_00188"/>
    </source>
</evidence>
<reference key="1">
    <citation type="submission" date="2007-02" db="EMBL/GenBank/DDBJ databases">
        <title>Complete sequence of Pyrobaculum calidifontis JCM 11548.</title>
        <authorList>
            <consortium name="US DOE Joint Genome Institute"/>
            <person name="Copeland A."/>
            <person name="Lucas S."/>
            <person name="Lapidus A."/>
            <person name="Barry K."/>
            <person name="Glavina del Rio T."/>
            <person name="Dalin E."/>
            <person name="Tice H."/>
            <person name="Pitluck S."/>
            <person name="Chain P."/>
            <person name="Malfatti S."/>
            <person name="Shin M."/>
            <person name="Vergez L."/>
            <person name="Schmutz J."/>
            <person name="Larimer F."/>
            <person name="Land M."/>
            <person name="Hauser L."/>
            <person name="Kyrpides N."/>
            <person name="Mikhailova N."/>
            <person name="Cozen A.E."/>
            <person name="Fitz-Gibbon S.T."/>
            <person name="House C.H."/>
            <person name="Saltikov C."/>
            <person name="Lowe T.M."/>
            <person name="Richardson P."/>
        </authorList>
    </citation>
    <scope>NUCLEOTIDE SEQUENCE [LARGE SCALE GENOMIC DNA]</scope>
    <source>
        <strain>DSM 21063 / JCM 11548 / VA1</strain>
    </source>
</reference>
<accession>A3MVF0</accession>
<protein>
    <recommendedName>
        <fullName evidence="1">Protease HtpX homolog</fullName>
        <ecNumber evidence="1">3.4.24.-</ecNumber>
    </recommendedName>
</protein>
<organism>
    <name type="scientific">Pyrobaculum calidifontis (strain DSM 21063 / JCM 11548 / VA1)</name>
    <dbReference type="NCBI Taxonomy" id="410359"/>
    <lineage>
        <taxon>Archaea</taxon>
        <taxon>Thermoproteota</taxon>
        <taxon>Thermoprotei</taxon>
        <taxon>Thermoproteales</taxon>
        <taxon>Thermoproteaceae</taxon>
        <taxon>Pyrobaculum</taxon>
    </lineage>
</organism>
<name>HTPX_PYRCJ</name>
<proteinExistence type="inferred from homology"/>
<gene>
    <name evidence="1" type="primary">htpX</name>
    <name type="ordered locus">Pcal_1192</name>
</gene>
<dbReference type="EC" id="3.4.24.-" evidence="1"/>
<dbReference type="EMBL" id="CP000561">
    <property type="protein sequence ID" value="ABO08617.1"/>
    <property type="molecule type" value="Genomic_DNA"/>
</dbReference>
<dbReference type="RefSeq" id="WP_011849875.1">
    <property type="nucleotide sequence ID" value="NC_009073.1"/>
</dbReference>
<dbReference type="STRING" id="410359.Pcal_1192"/>
<dbReference type="GeneID" id="4908908"/>
<dbReference type="KEGG" id="pcl:Pcal_1192"/>
<dbReference type="eggNOG" id="arCOG01331">
    <property type="taxonomic scope" value="Archaea"/>
</dbReference>
<dbReference type="HOGENOM" id="CLU_042266_4_2_2"/>
<dbReference type="OrthoDB" id="28389at2157"/>
<dbReference type="Proteomes" id="UP000001431">
    <property type="component" value="Chromosome"/>
</dbReference>
<dbReference type="GO" id="GO:0005886">
    <property type="term" value="C:plasma membrane"/>
    <property type="evidence" value="ECO:0007669"/>
    <property type="project" value="UniProtKB-SubCell"/>
</dbReference>
<dbReference type="GO" id="GO:0004222">
    <property type="term" value="F:metalloendopeptidase activity"/>
    <property type="evidence" value="ECO:0007669"/>
    <property type="project" value="UniProtKB-UniRule"/>
</dbReference>
<dbReference type="GO" id="GO:0008270">
    <property type="term" value="F:zinc ion binding"/>
    <property type="evidence" value="ECO:0007669"/>
    <property type="project" value="UniProtKB-UniRule"/>
</dbReference>
<dbReference type="GO" id="GO:0006508">
    <property type="term" value="P:proteolysis"/>
    <property type="evidence" value="ECO:0007669"/>
    <property type="project" value="UniProtKB-KW"/>
</dbReference>
<dbReference type="CDD" id="cd07338">
    <property type="entry name" value="M48B_HtpX_like"/>
    <property type="match status" value="1"/>
</dbReference>
<dbReference type="Gene3D" id="3.30.2010.10">
    <property type="entry name" value="Metalloproteases ('zincins'), catalytic domain"/>
    <property type="match status" value="1"/>
</dbReference>
<dbReference type="HAMAP" id="MF_00188">
    <property type="entry name" value="Pept_M48_protease_HtpX"/>
    <property type="match status" value="1"/>
</dbReference>
<dbReference type="InterPro" id="IPR050083">
    <property type="entry name" value="HtpX_protease"/>
</dbReference>
<dbReference type="InterPro" id="IPR022919">
    <property type="entry name" value="Pept_M48_protease_HtpX"/>
</dbReference>
<dbReference type="InterPro" id="IPR001915">
    <property type="entry name" value="Peptidase_M48"/>
</dbReference>
<dbReference type="PANTHER" id="PTHR43221">
    <property type="entry name" value="PROTEASE HTPX"/>
    <property type="match status" value="1"/>
</dbReference>
<dbReference type="PANTHER" id="PTHR43221:SF2">
    <property type="entry name" value="PROTEASE HTPX HOMOLOG"/>
    <property type="match status" value="1"/>
</dbReference>
<dbReference type="Pfam" id="PF01435">
    <property type="entry name" value="Peptidase_M48"/>
    <property type="match status" value="1"/>
</dbReference>
<dbReference type="PROSITE" id="PS00142">
    <property type="entry name" value="ZINC_PROTEASE"/>
    <property type="match status" value="1"/>
</dbReference>